<organism>
    <name type="scientific">Homo sapiens</name>
    <name type="common">Human</name>
    <dbReference type="NCBI Taxonomy" id="9606"/>
    <lineage>
        <taxon>Eukaryota</taxon>
        <taxon>Metazoa</taxon>
        <taxon>Chordata</taxon>
        <taxon>Craniata</taxon>
        <taxon>Vertebrata</taxon>
        <taxon>Euteleostomi</taxon>
        <taxon>Mammalia</taxon>
        <taxon>Eutheria</taxon>
        <taxon>Euarchontoglires</taxon>
        <taxon>Primates</taxon>
        <taxon>Haplorrhini</taxon>
        <taxon>Catarrhini</taxon>
        <taxon>Hominidae</taxon>
        <taxon>Homo</taxon>
    </lineage>
</organism>
<name>UPKL2_HUMAN</name>
<reference key="1">
    <citation type="journal article" date="2003" name="Nature">
        <title>The DNA sequence of human chromosome 7.</title>
        <authorList>
            <person name="Hillier L.W."/>
            <person name="Fulton R.S."/>
            <person name="Fulton L.A."/>
            <person name="Graves T.A."/>
            <person name="Pepin K.H."/>
            <person name="Wagner-McPherson C."/>
            <person name="Layman D."/>
            <person name="Maas J."/>
            <person name="Jaeger S."/>
            <person name="Walker R."/>
            <person name="Wylie K."/>
            <person name="Sekhon M."/>
            <person name="Becker M.C."/>
            <person name="O'Laughlin M.D."/>
            <person name="Schaller M.E."/>
            <person name="Fewell G.A."/>
            <person name="Delehaunty K.D."/>
            <person name="Miner T.L."/>
            <person name="Nash W.E."/>
            <person name="Cordes M."/>
            <person name="Du H."/>
            <person name="Sun H."/>
            <person name="Edwards J."/>
            <person name="Bradshaw-Cordum H."/>
            <person name="Ali J."/>
            <person name="Andrews S."/>
            <person name="Isak A."/>
            <person name="Vanbrunt A."/>
            <person name="Nguyen C."/>
            <person name="Du F."/>
            <person name="Lamar B."/>
            <person name="Courtney L."/>
            <person name="Kalicki J."/>
            <person name="Ozersky P."/>
            <person name="Bielicki L."/>
            <person name="Scott K."/>
            <person name="Holmes A."/>
            <person name="Harkins R."/>
            <person name="Harris A."/>
            <person name="Strong C.M."/>
            <person name="Hou S."/>
            <person name="Tomlinson C."/>
            <person name="Dauphin-Kohlberg S."/>
            <person name="Kozlowicz-Reilly A."/>
            <person name="Leonard S."/>
            <person name="Rohlfing T."/>
            <person name="Rock S.M."/>
            <person name="Tin-Wollam A.-M."/>
            <person name="Abbott A."/>
            <person name="Minx P."/>
            <person name="Maupin R."/>
            <person name="Strowmatt C."/>
            <person name="Latreille P."/>
            <person name="Miller N."/>
            <person name="Johnson D."/>
            <person name="Murray J."/>
            <person name="Woessner J.P."/>
            <person name="Wendl M.C."/>
            <person name="Yang S.-P."/>
            <person name="Schultz B.R."/>
            <person name="Wallis J.W."/>
            <person name="Spieth J."/>
            <person name="Bieri T.A."/>
            <person name="Nelson J.O."/>
            <person name="Berkowicz N."/>
            <person name="Wohldmann P.E."/>
            <person name="Cook L.L."/>
            <person name="Hickenbotham M.T."/>
            <person name="Eldred J."/>
            <person name="Williams D."/>
            <person name="Bedell J.A."/>
            <person name="Mardis E.R."/>
            <person name="Clifton S.W."/>
            <person name="Chissoe S.L."/>
            <person name="Marra M.A."/>
            <person name="Raymond C."/>
            <person name="Haugen E."/>
            <person name="Gillett W."/>
            <person name="Zhou Y."/>
            <person name="James R."/>
            <person name="Phelps K."/>
            <person name="Iadanoto S."/>
            <person name="Bubb K."/>
            <person name="Simms E."/>
            <person name="Levy R."/>
            <person name="Clendenning J."/>
            <person name="Kaul R."/>
            <person name="Kent W.J."/>
            <person name="Furey T.S."/>
            <person name="Baertsch R.A."/>
            <person name="Brent M.R."/>
            <person name="Keibler E."/>
            <person name="Flicek P."/>
            <person name="Bork P."/>
            <person name="Suyama M."/>
            <person name="Bailey J.A."/>
            <person name="Portnoy M.E."/>
            <person name="Torrents D."/>
            <person name="Chinwalla A.T."/>
            <person name="Gish W.R."/>
            <person name="Eddy S.R."/>
            <person name="McPherson J.D."/>
            <person name="Olson M.V."/>
            <person name="Eichler E.E."/>
            <person name="Green E.D."/>
            <person name="Waterston R.H."/>
            <person name="Wilson R.K."/>
        </authorList>
    </citation>
    <scope>NUCLEOTIDE SEQUENCE [LARGE SCALE GENOMIC DNA]</scope>
</reference>
<feature type="signal peptide" evidence="1">
    <location>
        <begin position="1"/>
        <end position="33"/>
    </location>
</feature>
<feature type="chain" id="PRO_5003196876" description="Uroplakin-3b-like protein 2" evidence="1">
    <location>
        <begin position="34"/>
        <end position="263"/>
    </location>
</feature>
<feature type="topological domain" description="Extracellular" evidence="2">
    <location>
        <begin position="34"/>
        <end position="204"/>
    </location>
</feature>
<feature type="transmembrane region" description="Helical" evidence="1">
    <location>
        <begin position="205"/>
        <end position="225"/>
    </location>
</feature>
<feature type="topological domain" description="Cytoplasmic" evidence="2">
    <location>
        <begin position="226"/>
        <end position="263"/>
    </location>
</feature>
<feature type="glycosylation site" description="N-linked (GlcNAc...) asparagine" evidence="1">
    <location>
        <position position="51"/>
    </location>
</feature>
<feature type="glycosylation site" description="N-linked (GlcNAc...) asparagine" evidence="1">
    <location>
        <position position="76"/>
    </location>
</feature>
<feature type="glycosylation site" description="N-linked (GlcNAc...) asparagine" evidence="1">
    <location>
        <position position="91"/>
    </location>
</feature>
<feature type="glycosylation site" description="N-linked (GlcNAc...) asparagine" evidence="1">
    <location>
        <position position="110"/>
    </location>
</feature>
<feature type="glycosylation site" description="N-linked (GlcNAc...) asparagine" evidence="1">
    <location>
        <position position="140"/>
    </location>
</feature>
<protein>
    <recommendedName>
        <fullName evidence="2">Uroplakin-3b-like protein 2</fullName>
    </recommendedName>
</protein>
<keyword id="KW-0325">Glycoprotein</keyword>
<keyword id="KW-0472">Membrane</keyword>
<keyword id="KW-1185">Reference proteome</keyword>
<keyword id="KW-0732">Signal</keyword>
<keyword id="KW-0812">Transmembrane</keyword>
<keyword id="KW-1133">Transmembrane helix</keyword>
<sequence>MDNSWRLGPAIGLSAGQSQLLVSLLLLLTRVQPGTDVAAPEHISYVPQLSNDTLAGRLTLSTFTLEQPLGQFSSHNISDLDTIWLVVALSNATQSFTAPRTNQDIPAPANFSQRGYYLTLRANRVLYQTRGQLHVLRVGNDTHCQPTKIGCNHPLPGPGPYRVKFLVMNDEGPVAETKWSSDTRLQQAQALRAVPGPQSPGTVVIIAILSILLAVLLTVLLAVLIYTCFNSCRSTSLSGPEEAGSVRRYTTHLAFSTPAEGAS</sequence>
<comment type="subcellular location">
    <subcellularLocation>
        <location evidence="1">Membrane</location>
        <topology evidence="1">Single-pass type I membrane protein</topology>
    </subcellularLocation>
</comment>
<comment type="similarity">
    <text evidence="2">Belongs to the uroplakin-3 family.</text>
</comment>
<gene>
    <name evidence="3" type="primary">UPK3BL2</name>
</gene>
<accession>E5RIL1</accession>
<dbReference type="EMBL" id="AC093668">
    <property type="status" value="NOT_ANNOTATED_CDS"/>
    <property type="molecule type" value="Genomic_DNA"/>
</dbReference>
<dbReference type="CCDS" id="CCDS87532.1"/>
<dbReference type="RefSeq" id="NP_001350435.1">
    <property type="nucleotide sequence ID" value="NM_001363506.2"/>
</dbReference>
<dbReference type="RefSeq" id="XP_016868385.1">
    <property type="nucleotide sequence ID" value="XM_017012896.1"/>
</dbReference>
<dbReference type="SMR" id="E5RIL1"/>
<dbReference type="GlyCosmos" id="E5RIL1">
    <property type="glycosylation" value="5 sites, No reported glycans"/>
</dbReference>
<dbReference type="GlyGen" id="E5RIL1">
    <property type="glycosylation" value="5 sites"/>
</dbReference>
<dbReference type="iPTMnet" id="E5RIL1"/>
<dbReference type="PhosphoSitePlus" id="E5RIL1"/>
<dbReference type="BioMuta" id="HGNC:53444"/>
<dbReference type="jPOST" id="E5RIL1"/>
<dbReference type="MassIVE" id="E5RIL1"/>
<dbReference type="ProteomicsDB" id="16320"/>
<dbReference type="Pumba" id="E5RIL1"/>
<dbReference type="DNASU" id="100134938"/>
<dbReference type="Ensembl" id="ENST00000644544.2">
    <property type="protein sequence ID" value="ENSP00000494359.1"/>
    <property type="gene ID" value="ENSG00000284981.2"/>
</dbReference>
<dbReference type="GeneID" id="107983993"/>
<dbReference type="KEGG" id="hsa:100134938"/>
<dbReference type="MANE-Select" id="ENST00000644544.2">
    <property type="protein sequence ID" value="ENSP00000494359.1"/>
    <property type="RefSeq nucleotide sequence ID" value="NM_001363506.2"/>
    <property type="RefSeq protein sequence ID" value="NP_001350435.1"/>
</dbReference>
<dbReference type="UCSC" id="uc064gov.1">
    <property type="organism name" value="human"/>
</dbReference>
<dbReference type="AGR" id="HGNC:37278"/>
<dbReference type="AGR" id="HGNC:53444"/>
<dbReference type="CTD" id="100134938"/>
<dbReference type="GeneCards" id="UPK3BL2"/>
<dbReference type="HGNC" id="HGNC:53444">
    <property type="gene designation" value="UPK3BL2"/>
</dbReference>
<dbReference type="HPA" id="ENSG00000284981">
    <property type="expression patterns" value="Group enriched (esophagus, lymphoid tissue)"/>
</dbReference>
<dbReference type="neXtProt" id="NX_E5RIL1"/>
<dbReference type="OpenTargets" id="ENSG00000267368"/>
<dbReference type="VEuPathDB" id="HostDB:ENSG00000284981"/>
<dbReference type="GeneTree" id="ENSGT00940000153392"/>
<dbReference type="HOGENOM" id="CLU_082608_0_0_1"/>
<dbReference type="InParanoid" id="E5RIL1"/>
<dbReference type="OMA" id="HTWAGSA"/>
<dbReference type="OrthoDB" id="9939598at2759"/>
<dbReference type="PAN-GO" id="E5RIL1">
    <property type="GO annotations" value="1 GO annotation based on evolutionary models"/>
</dbReference>
<dbReference type="PhylomeDB" id="E5RIL1"/>
<dbReference type="TreeFam" id="TF336628"/>
<dbReference type="PathwayCommons" id="E5RIL1"/>
<dbReference type="SignaLink" id="E5RIL1"/>
<dbReference type="Pharos" id="E5RIL1">
    <property type="development level" value="Tdark"/>
</dbReference>
<dbReference type="PRO" id="PR:E5RIL1"/>
<dbReference type="Proteomes" id="UP000005640">
    <property type="component" value="Chromosome 7"/>
</dbReference>
<dbReference type="RNAct" id="E5RIL1">
    <property type="molecule type" value="protein"/>
</dbReference>
<dbReference type="Bgee" id="ENSG00000284981">
    <property type="expression patterns" value="Expressed in granulocyte and 93 other cell types or tissues"/>
</dbReference>
<dbReference type="GO" id="GO:0016020">
    <property type="term" value="C:membrane"/>
    <property type="evidence" value="ECO:0000318"/>
    <property type="project" value="GO_Central"/>
</dbReference>
<dbReference type="InterPro" id="IPR024831">
    <property type="entry name" value="Uroplakin-3"/>
</dbReference>
<dbReference type="PANTHER" id="PTHR15446">
    <property type="entry name" value="UROPLAKIN III"/>
    <property type="match status" value="1"/>
</dbReference>
<dbReference type="PANTHER" id="PTHR15446:SF2">
    <property type="entry name" value="UROPLAKIN-3B-LIKE PROTEIN 1-RELATED"/>
    <property type="match status" value="1"/>
</dbReference>
<evidence type="ECO:0000255" key="1"/>
<evidence type="ECO:0000305" key="2"/>
<evidence type="ECO:0000312" key="3">
    <source>
        <dbReference type="HGNC" id="HGNC:53444"/>
    </source>
</evidence>
<proteinExistence type="inferred from homology"/>